<gene>
    <name type="primary">tif35</name>
    <name type="ORF">AO090011000648</name>
</gene>
<organism>
    <name type="scientific">Aspergillus oryzae (strain ATCC 42149 / RIB 40)</name>
    <name type="common">Yellow koji mold</name>
    <dbReference type="NCBI Taxonomy" id="510516"/>
    <lineage>
        <taxon>Eukaryota</taxon>
        <taxon>Fungi</taxon>
        <taxon>Dikarya</taxon>
        <taxon>Ascomycota</taxon>
        <taxon>Pezizomycotina</taxon>
        <taxon>Eurotiomycetes</taxon>
        <taxon>Eurotiomycetidae</taxon>
        <taxon>Eurotiales</taxon>
        <taxon>Aspergillaceae</taxon>
        <taxon>Aspergillus</taxon>
        <taxon>Aspergillus subgen. Circumdati</taxon>
    </lineage>
</organism>
<proteinExistence type="inferred from homology"/>
<accession>Q2U002</accession>
<name>EIF3G_ASPOR</name>
<sequence length="287" mass="31538">MSKLANRADWADDEEFDDPSALPAQQVTTNKDGTKTVVSYRFNDEGKKVKVTRRIKTTVVREHVNPQVAERRSWAKFGLEKGHAPGPSFDTTSVGENIAFRPSINWKAQAAEAEKNGGEKGSMKDQLKDKKVKCRICSGEHFTARCPFKDTMAPVDEPTAGGAGEDDEAAAGAVGTGSGSYVPPHLRKGAAGGGERMGGKFEKDDLATLRVTNVSELAEEGELRDLFERFGRVTRVFLARDRETQRAKGFAFISFADRSDAARACEKMDGFGYRHLILRVEFAKRTT</sequence>
<feature type="chain" id="PRO_0000365436" description="Eukaryotic translation initiation factor 3 subunit G">
    <location>
        <begin position="1"/>
        <end position="287"/>
    </location>
</feature>
<feature type="domain" description="RRM" evidence="1">
    <location>
        <begin position="207"/>
        <end position="285"/>
    </location>
</feature>
<feature type="region of interest" description="Disordered" evidence="2">
    <location>
        <begin position="1"/>
        <end position="34"/>
    </location>
</feature>
<feature type="region of interest" description="Disordered" evidence="2">
    <location>
        <begin position="159"/>
        <end position="184"/>
    </location>
</feature>
<evidence type="ECO:0000255" key="1">
    <source>
        <dbReference type="HAMAP-Rule" id="MF_03006"/>
    </source>
</evidence>
<evidence type="ECO:0000256" key="2">
    <source>
        <dbReference type="SAM" id="MobiDB-lite"/>
    </source>
</evidence>
<protein>
    <recommendedName>
        <fullName evidence="1">Eukaryotic translation initiation factor 3 subunit G</fullName>
        <shortName evidence="1">eIF3g</shortName>
    </recommendedName>
    <alternativeName>
        <fullName evidence="1">Eukaryotic translation initiation factor 3 RNA-binding subunit</fullName>
        <shortName evidence="1">eIF-3 RNA-binding subunit</shortName>
    </alternativeName>
    <alternativeName>
        <fullName evidence="1">Translation initiation factor eIF3 p33 subunit homolog</fullName>
        <shortName evidence="1">eIF3 p33 homolog</shortName>
    </alternativeName>
</protein>
<dbReference type="EMBL" id="BA000055">
    <property type="protein sequence ID" value="BAE65113.1"/>
    <property type="molecule type" value="Genomic_DNA"/>
</dbReference>
<dbReference type="RefSeq" id="XP_001826246.1">
    <property type="nucleotide sequence ID" value="XM_001826194.2"/>
</dbReference>
<dbReference type="SMR" id="Q2U002"/>
<dbReference type="STRING" id="510516.Q2U002"/>
<dbReference type="EnsemblFungi" id="BAE65113">
    <property type="protein sequence ID" value="BAE65113"/>
    <property type="gene ID" value="AO090011000648"/>
</dbReference>
<dbReference type="GeneID" id="5998349"/>
<dbReference type="KEGG" id="aor:AO090011000648"/>
<dbReference type="VEuPathDB" id="FungiDB:AO090011000648"/>
<dbReference type="HOGENOM" id="CLU_034595_0_0_1"/>
<dbReference type="OMA" id="ICQGDHF"/>
<dbReference type="OrthoDB" id="104628at5052"/>
<dbReference type="Proteomes" id="UP000006564">
    <property type="component" value="Chromosome 7"/>
</dbReference>
<dbReference type="GO" id="GO:0016282">
    <property type="term" value="C:eukaryotic 43S preinitiation complex"/>
    <property type="evidence" value="ECO:0007669"/>
    <property type="project" value="UniProtKB-UniRule"/>
</dbReference>
<dbReference type="GO" id="GO:0033290">
    <property type="term" value="C:eukaryotic 48S preinitiation complex"/>
    <property type="evidence" value="ECO:0007669"/>
    <property type="project" value="UniProtKB-UniRule"/>
</dbReference>
<dbReference type="GO" id="GO:0071540">
    <property type="term" value="C:eukaryotic translation initiation factor 3 complex, eIF3e"/>
    <property type="evidence" value="ECO:0007669"/>
    <property type="project" value="EnsemblFungi"/>
</dbReference>
<dbReference type="GO" id="GO:0071541">
    <property type="term" value="C:eukaryotic translation initiation factor 3 complex, eIF3m"/>
    <property type="evidence" value="ECO:0007669"/>
    <property type="project" value="EnsemblFungi"/>
</dbReference>
<dbReference type="GO" id="GO:0043614">
    <property type="term" value="C:multi-eIF complex"/>
    <property type="evidence" value="ECO:0007669"/>
    <property type="project" value="EnsemblFungi"/>
</dbReference>
<dbReference type="GO" id="GO:0003723">
    <property type="term" value="F:RNA binding"/>
    <property type="evidence" value="ECO:0007669"/>
    <property type="project" value="UniProtKB-UniRule"/>
</dbReference>
<dbReference type="GO" id="GO:0003743">
    <property type="term" value="F:translation initiation factor activity"/>
    <property type="evidence" value="ECO:0007669"/>
    <property type="project" value="UniProtKB-UniRule"/>
</dbReference>
<dbReference type="GO" id="GO:0001732">
    <property type="term" value="P:formation of cytoplasmic translation initiation complex"/>
    <property type="evidence" value="ECO:0007669"/>
    <property type="project" value="UniProtKB-UniRule"/>
</dbReference>
<dbReference type="GO" id="GO:0002188">
    <property type="term" value="P:translation reinitiation"/>
    <property type="evidence" value="ECO:0007669"/>
    <property type="project" value="EnsemblFungi"/>
</dbReference>
<dbReference type="GO" id="GO:0006415">
    <property type="term" value="P:translational termination"/>
    <property type="evidence" value="ECO:0007669"/>
    <property type="project" value="EnsemblFungi"/>
</dbReference>
<dbReference type="CDD" id="cd12933">
    <property type="entry name" value="eIF3G"/>
    <property type="match status" value="1"/>
</dbReference>
<dbReference type="CDD" id="cd12408">
    <property type="entry name" value="RRM_eIF3G_like"/>
    <property type="match status" value="1"/>
</dbReference>
<dbReference type="FunFam" id="3.30.70.330:FF:000328">
    <property type="entry name" value="Eukaryotic translation initiation factor 3 subunit G"/>
    <property type="match status" value="1"/>
</dbReference>
<dbReference type="Gene3D" id="3.30.70.330">
    <property type="match status" value="1"/>
</dbReference>
<dbReference type="HAMAP" id="MF_03006">
    <property type="entry name" value="eIF3g"/>
    <property type="match status" value="1"/>
</dbReference>
<dbReference type="InterPro" id="IPR017334">
    <property type="entry name" value="eIF3_g"/>
</dbReference>
<dbReference type="InterPro" id="IPR024675">
    <property type="entry name" value="eIF3g_N"/>
</dbReference>
<dbReference type="InterPro" id="IPR034240">
    <property type="entry name" value="eIF3G_RRM"/>
</dbReference>
<dbReference type="InterPro" id="IPR012677">
    <property type="entry name" value="Nucleotide-bd_a/b_plait_sf"/>
</dbReference>
<dbReference type="InterPro" id="IPR035979">
    <property type="entry name" value="RBD_domain_sf"/>
</dbReference>
<dbReference type="InterPro" id="IPR000504">
    <property type="entry name" value="RRM_dom"/>
</dbReference>
<dbReference type="PANTHER" id="PTHR10352">
    <property type="entry name" value="EUKARYOTIC TRANSLATION INITIATION FACTOR 3 SUBUNIT G"/>
    <property type="match status" value="1"/>
</dbReference>
<dbReference type="Pfam" id="PF12353">
    <property type="entry name" value="eIF3g"/>
    <property type="match status" value="1"/>
</dbReference>
<dbReference type="Pfam" id="PF00076">
    <property type="entry name" value="RRM_1"/>
    <property type="match status" value="1"/>
</dbReference>
<dbReference type="PIRSF" id="PIRSF037949">
    <property type="entry name" value="Transl_init_eIF-3_RNA-bind"/>
    <property type="match status" value="1"/>
</dbReference>
<dbReference type="SMART" id="SM00360">
    <property type="entry name" value="RRM"/>
    <property type="match status" value="1"/>
</dbReference>
<dbReference type="SUPFAM" id="SSF54928">
    <property type="entry name" value="RNA-binding domain, RBD"/>
    <property type="match status" value="1"/>
</dbReference>
<dbReference type="PROSITE" id="PS50102">
    <property type="entry name" value="RRM"/>
    <property type="match status" value="1"/>
</dbReference>
<keyword id="KW-0963">Cytoplasm</keyword>
<keyword id="KW-0396">Initiation factor</keyword>
<keyword id="KW-0648">Protein biosynthesis</keyword>
<keyword id="KW-1185">Reference proteome</keyword>
<keyword id="KW-0694">RNA-binding</keyword>
<comment type="function">
    <text evidence="1">RNA-binding component of the eukaryotic translation initiation factor 3 (eIF-3) complex, which is involved in protein synthesis of a specialized repertoire of mRNAs and, together with other initiation factors, stimulates binding of mRNA and methionyl-tRNAi to the 40S ribosome. The eIF-3 complex specifically targets and initiates translation of a subset of mRNAs involved in cell proliferation. This subunit can bind 18S rRNA.</text>
</comment>
<comment type="subunit">
    <text evidence="1">Component of the eukaryotic translation initiation factor 3 (eIF-3) complex.</text>
</comment>
<comment type="subcellular location">
    <subcellularLocation>
        <location evidence="1">Cytoplasm</location>
    </subcellularLocation>
</comment>
<comment type="similarity">
    <text evidence="1">Belongs to the eIF-3 subunit G family.</text>
</comment>
<reference key="1">
    <citation type="journal article" date="2005" name="Nature">
        <title>Genome sequencing and analysis of Aspergillus oryzae.</title>
        <authorList>
            <person name="Machida M."/>
            <person name="Asai K."/>
            <person name="Sano M."/>
            <person name="Tanaka T."/>
            <person name="Kumagai T."/>
            <person name="Terai G."/>
            <person name="Kusumoto K."/>
            <person name="Arima T."/>
            <person name="Akita O."/>
            <person name="Kashiwagi Y."/>
            <person name="Abe K."/>
            <person name="Gomi K."/>
            <person name="Horiuchi H."/>
            <person name="Kitamoto K."/>
            <person name="Kobayashi T."/>
            <person name="Takeuchi M."/>
            <person name="Denning D.W."/>
            <person name="Galagan J.E."/>
            <person name="Nierman W.C."/>
            <person name="Yu J."/>
            <person name="Archer D.B."/>
            <person name="Bennett J.W."/>
            <person name="Bhatnagar D."/>
            <person name="Cleveland T.E."/>
            <person name="Fedorova N.D."/>
            <person name="Gotoh O."/>
            <person name="Horikawa H."/>
            <person name="Hosoyama A."/>
            <person name="Ichinomiya M."/>
            <person name="Igarashi R."/>
            <person name="Iwashita K."/>
            <person name="Juvvadi P.R."/>
            <person name="Kato M."/>
            <person name="Kato Y."/>
            <person name="Kin T."/>
            <person name="Kokubun A."/>
            <person name="Maeda H."/>
            <person name="Maeyama N."/>
            <person name="Maruyama J."/>
            <person name="Nagasaki H."/>
            <person name="Nakajima T."/>
            <person name="Oda K."/>
            <person name="Okada K."/>
            <person name="Paulsen I."/>
            <person name="Sakamoto K."/>
            <person name="Sawano T."/>
            <person name="Takahashi M."/>
            <person name="Takase K."/>
            <person name="Terabayashi Y."/>
            <person name="Wortman J.R."/>
            <person name="Yamada O."/>
            <person name="Yamagata Y."/>
            <person name="Anazawa H."/>
            <person name="Hata Y."/>
            <person name="Koide Y."/>
            <person name="Komori T."/>
            <person name="Koyama Y."/>
            <person name="Minetoki T."/>
            <person name="Suharnan S."/>
            <person name="Tanaka A."/>
            <person name="Isono K."/>
            <person name="Kuhara S."/>
            <person name="Ogasawara N."/>
            <person name="Kikuchi H."/>
        </authorList>
    </citation>
    <scope>NUCLEOTIDE SEQUENCE [LARGE SCALE GENOMIC DNA]</scope>
    <source>
        <strain>ATCC 42149 / RIB 40</strain>
    </source>
</reference>